<comment type="function">
    <text evidence="1">Is required not only for elongation of protein synthesis but also for the initiation of all mRNA translation through initiator tRNA(fMet) aminoacylation.</text>
</comment>
<comment type="catalytic activity">
    <reaction evidence="1">
        <text>tRNA(Met) + L-methionine + ATP = L-methionyl-tRNA(Met) + AMP + diphosphate</text>
        <dbReference type="Rhea" id="RHEA:13481"/>
        <dbReference type="Rhea" id="RHEA-COMP:9667"/>
        <dbReference type="Rhea" id="RHEA-COMP:9698"/>
        <dbReference type="ChEBI" id="CHEBI:30616"/>
        <dbReference type="ChEBI" id="CHEBI:33019"/>
        <dbReference type="ChEBI" id="CHEBI:57844"/>
        <dbReference type="ChEBI" id="CHEBI:78442"/>
        <dbReference type="ChEBI" id="CHEBI:78530"/>
        <dbReference type="ChEBI" id="CHEBI:456215"/>
        <dbReference type="EC" id="6.1.1.10"/>
    </reaction>
</comment>
<comment type="cofactor">
    <cofactor evidence="1">
        <name>Zn(2+)</name>
        <dbReference type="ChEBI" id="CHEBI:29105"/>
    </cofactor>
    <text evidence="1">Binds 1 zinc ion per subunit.</text>
</comment>
<comment type="subunit">
    <text evidence="1">Homodimer.</text>
</comment>
<comment type="subcellular location">
    <subcellularLocation>
        <location evidence="1">Cytoplasm</location>
    </subcellularLocation>
</comment>
<comment type="similarity">
    <text evidence="1">Belongs to the class-I aminoacyl-tRNA synthetase family. MetG type 1 subfamily.</text>
</comment>
<gene>
    <name evidence="1" type="primary">metG</name>
    <name type="ordered locus">BAPKO_0618</name>
    <name type="ordered locus">BafPKo_0603</name>
</gene>
<keyword id="KW-0030">Aminoacyl-tRNA synthetase</keyword>
<keyword id="KW-0067">ATP-binding</keyword>
<keyword id="KW-0963">Cytoplasm</keyword>
<keyword id="KW-0436">Ligase</keyword>
<keyword id="KW-0479">Metal-binding</keyword>
<keyword id="KW-0547">Nucleotide-binding</keyword>
<keyword id="KW-0648">Protein biosynthesis</keyword>
<keyword id="KW-0694">RNA-binding</keyword>
<keyword id="KW-0820">tRNA-binding</keyword>
<keyword id="KW-0862">Zinc</keyword>
<accession>Q0SMS1</accession>
<accession>G0IQD7</accession>
<sequence>MKKMNLITAALPYVNNIPHLGNLVQVLSADAFARYSKMSGIETLYICGTDEYGTATETKALIEKTTPLELCNKYYEIHKSIYKWFNIEFDIFGRTTNKHHQETVQNFFLKLEKNGYIKERETEQFFCNKDLIFLADRYVIGECPECQSMAKGDQCDNCSKLLNPTDLINPKCIICKNKPILKKTNHLYIDLPKIKTKLEKWIKNPTTSKNWNTNALKMTNAFLRDGLKERAITRDLKWGIPVPKKGYENKVFYVWFDAPIGYISITKNIVKNWESWWKNNKQVNLVQFIGKDNILFHTIMFPCIKIGSKENWTTLNQLSSSEYLNYENLKFSKSEGTGIFGNDVITTGIPSDVWRFYIYYNRPEKSDFQFIWQDLMERVNTELIDNFSNLVNRVLTFQKKFFGDVIETIEIQHKFWEQITPKYNKILNLFKNTELKSALKEILKISSFGNKIFQDNEPWKRKESSPQEIKELILNLIYLIRDLSILMMPFIPETSKKIQQFFGNSYQFSTKILGTKSGIKKIEFVEILFNKLEQKKINDLRLKYSGEKNMKEKEQPENLFREKVLLRVVKINKIERNPEAKNLFILKLDDGTNKDKQIVSSLEGYYTEEELLGKHIIIVDNLKPAKFRGIKSEGMLIAAEDKNKNFKIIIVEDSIKNPIAGERIILENDQNKDLTCPPKIDINKFSKANIITENGELKINGINLILEHSKNKILSKDIPNGIVC</sequence>
<reference key="1">
    <citation type="journal article" date="2006" name="BMC Genomics">
        <title>Comparative genome analysis: selection pressure on the Borrelia vls cassettes is essential for infectivity.</title>
        <authorList>
            <person name="Gloeckner G."/>
            <person name="Schulte-Spechtel U."/>
            <person name="Schilhabel M."/>
            <person name="Felder M."/>
            <person name="Suehnel J."/>
            <person name="Wilske B."/>
            <person name="Platzer M."/>
        </authorList>
    </citation>
    <scope>NUCLEOTIDE SEQUENCE [LARGE SCALE GENOMIC DNA]</scope>
    <source>
        <strain>PKo</strain>
    </source>
</reference>
<reference key="2">
    <citation type="journal article" date="2011" name="J. Bacteriol.">
        <title>Whole-genome sequences of two Borrelia afzelii and two Borrelia garinii Lyme disease agent isolates.</title>
        <authorList>
            <person name="Casjens S.R."/>
            <person name="Mongodin E.F."/>
            <person name="Qiu W.G."/>
            <person name="Dunn J.J."/>
            <person name="Luft B.J."/>
            <person name="Fraser-Liggett C.M."/>
            <person name="Schutzer S.E."/>
        </authorList>
    </citation>
    <scope>NUCLEOTIDE SEQUENCE [LARGE SCALE GENOMIC DNA]</scope>
    <source>
        <strain>PKo</strain>
    </source>
</reference>
<dbReference type="EC" id="6.1.1.10" evidence="1"/>
<dbReference type="EMBL" id="CP000395">
    <property type="protein sequence ID" value="ABH01857.1"/>
    <property type="molecule type" value="Genomic_DNA"/>
</dbReference>
<dbReference type="EMBL" id="CP002933">
    <property type="protein sequence ID" value="AEL69807.1"/>
    <property type="molecule type" value="Genomic_DNA"/>
</dbReference>
<dbReference type="RefSeq" id="WP_004789630.1">
    <property type="nucleotide sequence ID" value="NZ_CP160066.1"/>
</dbReference>
<dbReference type="SMR" id="Q0SMS1"/>
<dbReference type="STRING" id="29518.BLA32_01330"/>
<dbReference type="GeneID" id="77265433"/>
<dbReference type="KEGG" id="baf:BAPKO_0618"/>
<dbReference type="KEGG" id="bafz:BafPKo_0603"/>
<dbReference type="PATRIC" id="fig|390236.22.peg.580"/>
<dbReference type="eggNOG" id="COG0073">
    <property type="taxonomic scope" value="Bacteria"/>
</dbReference>
<dbReference type="eggNOG" id="COG0143">
    <property type="taxonomic scope" value="Bacteria"/>
</dbReference>
<dbReference type="HOGENOM" id="CLU_009710_3_2_12"/>
<dbReference type="OrthoDB" id="9810191at2"/>
<dbReference type="Proteomes" id="UP000005216">
    <property type="component" value="Chromosome"/>
</dbReference>
<dbReference type="GO" id="GO:0017101">
    <property type="term" value="C:aminoacyl-tRNA synthetase multienzyme complex"/>
    <property type="evidence" value="ECO:0007669"/>
    <property type="project" value="TreeGrafter"/>
</dbReference>
<dbReference type="GO" id="GO:0005829">
    <property type="term" value="C:cytosol"/>
    <property type="evidence" value="ECO:0007669"/>
    <property type="project" value="TreeGrafter"/>
</dbReference>
<dbReference type="GO" id="GO:0005524">
    <property type="term" value="F:ATP binding"/>
    <property type="evidence" value="ECO:0007669"/>
    <property type="project" value="UniProtKB-UniRule"/>
</dbReference>
<dbReference type="GO" id="GO:0046872">
    <property type="term" value="F:metal ion binding"/>
    <property type="evidence" value="ECO:0007669"/>
    <property type="project" value="UniProtKB-KW"/>
</dbReference>
<dbReference type="GO" id="GO:0004825">
    <property type="term" value="F:methionine-tRNA ligase activity"/>
    <property type="evidence" value="ECO:0007669"/>
    <property type="project" value="UniProtKB-UniRule"/>
</dbReference>
<dbReference type="GO" id="GO:0000049">
    <property type="term" value="F:tRNA binding"/>
    <property type="evidence" value="ECO:0007669"/>
    <property type="project" value="UniProtKB-KW"/>
</dbReference>
<dbReference type="GO" id="GO:0006431">
    <property type="term" value="P:methionyl-tRNA aminoacylation"/>
    <property type="evidence" value="ECO:0007669"/>
    <property type="project" value="UniProtKB-UniRule"/>
</dbReference>
<dbReference type="CDD" id="cd07957">
    <property type="entry name" value="Anticodon_Ia_Met"/>
    <property type="match status" value="1"/>
</dbReference>
<dbReference type="CDD" id="cd00814">
    <property type="entry name" value="MetRS_core"/>
    <property type="match status" value="1"/>
</dbReference>
<dbReference type="CDD" id="cd02153">
    <property type="entry name" value="tRNA_bindingDomain"/>
    <property type="match status" value="1"/>
</dbReference>
<dbReference type="FunFam" id="2.20.28.20:FF:000001">
    <property type="entry name" value="Methionine--tRNA ligase"/>
    <property type="match status" value="1"/>
</dbReference>
<dbReference type="Gene3D" id="3.40.50.620">
    <property type="entry name" value="HUPs"/>
    <property type="match status" value="1"/>
</dbReference>
<dbReference type="Gene3D" id="1.10.730.10">
    <property type="entry name" value="Isoleucyl-tRNA Synthetase, Domain 1"/>
    <property type="match status" value="1"/>
</dbReference>
<dbReference type="Gene3D" id="2.20.28.20">
    <property type="entry name" value="Methionyl-tRNA synthetase, Zn-domain"/>
    <property type="match status" value="1"/>
</dbReference>
<dbReference type="Gene3D" id="2.40.50.140">
    <property type="entry name" value="Nucleic acid-binding proteins"/>
    <property type="match status" value="1"/>
</dbReference>
<dbReference type="HAMAP" id="MF_00098">
    <property type="entry name" value="Met_tRNA_synth_type1"/>
    <property type="match status" value="1"/>
</dbReference>
<dbReference type="InterPro" id="IPR001412">
    <property type="entry name" value="aa-tRNA-synth_I_CS"/>
</dbReference>
<dbReference type="InterPro" id="IPR041872">
    <property type="entry name" value="Anticodon_Met"/>
</dbReference>
<dbReference type="InterPro" id="IPR004495">
    <property type="entry name" value="Met-tRNA-synth_bsu_C"/>
</dbReference>
<dbReference type="InterPro" id="IPR023458">
    <property type="entry name" value="Met-tRNA_ligase_1"/>
</dbReference>
<dbReference type="InterPro" id="IPR014758">
    <property type="entry name" value="Met-tRNA_synth"/>
</dbReference>
<dbReference type="InterPro" id="IPR015413">
    <property type="entry name" value="Methionyl/Leucyl_tRNA_Synth"/>
</dbReference>
<dbReference type="InterPro" id="IPR033911">
    <property type="entry name" value="MetRS_core"/>
</dbReference>
<dbReference type="InterPro" id="IPR029038">
    <property type="entry name" value="MetRS_Zn"/>
</dbReference>
<dbReference type="InterPro" id="IPR012340">
    <property type="entry name" value="NA-bd_OB-fold"/>
</dbReference>
<dbReference type="InterPro" id="IPR014729">
    <property type="entry name" value="Rossmann-like_a/b/a_fold"/>
</dbReference>
<dbReference type="InterPro" id="IPR002547">
    <property type="entry name" value="tRNA-bd_dom"/>
</dbReference>
<dbReference type="InterPro" id="IPR009080">
    <property type="entry name" value="tRNAsynth_Ia_anticodon-bd"/>
</dbReference>
<dbReference type="NCBIfam" id="TIGR00398">
    <property type="entry name" value="metG"/>
    <property type="match status" value="1"/>
</dbReference>
<dbReference type="NCBIfam" id="TIGR00399">
    <property type="entry name" value="metG_C_term"/>
    <property type="match status" value="1"/>
</dbReference>
<dbReference type="NCBIfam" id="NF001100">
    <property type="entry name" value="PRK00133.1"/>
    <property type="match status" value="1"/>
</dbReference>
<dbReference type="PANTHER" id="PTHR45765">
    <property type="entry name" value="METHIONINE--TRNA LIGASE"/>
    <property type="match status" value="1"/>
</dbReference>
<dbReference type="PANTHER" id="PTHR45765:SF1">
    <property type="entry name" value="METHIONINE--TRNA LIGASE, CYTOPLASMIC"/>
    <property type="match status" value="1"/>
</dbReference>
<dbReference type="Pfam" id="PF19303">
    <property type="entry name" value="Anticodon_3"/>
    <property type="match status" value="1"/>
</dbReference>
<dbReference type="Pfam" id="PF09334">
    <property type="entry name" value="tRNA-synt_1g"/>
    <property type="match status" value="1"/>
</dbReference>
<dbReference type="Pfam" id="PF01588">
    <property type="entry name" value="tRNA_bind"/>
    <property type="match status" value="1"/>
</dbReference>
<dbReference type="PRINTS" id="PR01041">
    <property type="entry name" value="TRNASYNTHMET"/>
</dbReference>
<dbReference type="SUPFAM" id="SSF47323">
    <property type="entry name" value="Anticodon-binding domain of a subclass of class I aminoacyl-tRNA synthetases"/>
    <property type="match status" value="1"/>
</dbReference>
<dbReference type="SUPFAM" id="SSF57770">
    <property type="entry name" value="Methionyl-tRNA synthetase (MetRS), Zn-domain"/>
    <property type="match status" value="1"/>
</dbReference>
<dbReference type="SUPFAM" id="SSF50249">
    <property type="entry name" value="Nucleic acid-binding proteins"/>
    <property type="match status" value="1"/>
</dbReference>
<dbReference type="SUPFAM" id="SSF52374">
    <property type="entry name" value="Nucleotidylyl transferase"/>
    <property type="match status" value="1"/>
</dbReference>
<dbReference type="PROSITE" id="PS00178">
    <property type="entry name" value="AA_TRNA_LIGASE_I"/>
    <property type="match status" value="1"/>
</dbReference>
<dbReference type="PROSITE" id="PS50886">
    <property type="entry name" value="TRBD"/>
    <property type="match status" value="1"/>
</dbReference>
<protein>
    <recommendedName>
        <fullName evidence="1">Methionine--tRNA ligase</fullName>
        <ecNumber evidence="1">6.1.1.10</ecNumber>
    </recommendedName>
    <alternativeName>
        <fullName evidence="1">Methionyl-tRNA synthetase</fullName>
        <shortName evidence="1">MetRS</shortName>
    </alternativeName>
</protein>
<proteinExistence type="inferred from homology"/>
<feature type="chain" id="PRO_0000331786" description="Methionine--tRNA ligase">
    <location>
        <begin position="1"/>
        <end position="724"/>
    </location>
</feature>
<feature type="domain" description="tRNA-binding" evidence="1">
    <location>
        <begin position="560"/>
        <end position="665"/>
    </location>
</feature>
<feature type="short sequence motif" description="'HIGH' region">
    <location>
        <begin position="12"/>
        <end position="22"/>
    </location>
</feature>
<feature type="short sequence motif" description="'KMSKS' region">
    <location>
        <begin position="330"/>
        <end position="334"/>
    </location>
</feature>
<feature type="binding site" evidence="1">
    <location>
        <position position="143"/>
    </location>
    <ligand>
        <name>Zn(2+)</name>
        <dbReference type="ChEBI" id="CHEBI:29105"/>
    </ligand>
</feature>
<feature type="binding site" evidence="1">
    <location>
        <position position="146"/>
    </location>
    <ligand>
        <name>Zn(2+)</name>
        <dbReference type="ChEBI" id="CHEBI:29105"/>
    </ligand>
</feature>
<feature type="binding site" evidence="1">
    <location>
        <position position="155"/>
    </location>
    <ligand>
        <name>Zn(2+)</name>
        <dbReference type="ChEBI" id="CHEBI:29105"/>
    </ligand>
</feature>
<feature type="binding site" evidence="1">
    <location>
        <position position="158"/>
    </location>
    <ligand>
        <name>Zn(2+)</name>
        <dbReference type="ChEBI" id="CHEBI:29105"/>
    </ligand>
</feature>
<feature type="binding site" evidence="1">
    <location>
        <position position="333"/>
    </location>
    <ligand>
        <name>ATP</name>
        <dbReference type="ChEBI" id="CHEBI:30616"/>
    </ligand>
</feature>
<name>SYM_BORAP</name>
<evidence type="ECO:0000255" key="1">
    <source>
        <dbReference type="HAMAP-Rule" id="MF_00098"/>
    </source>
</evidence>
<organism>
    <name type="scientific">Borreliella afzelii (strain PKo)</name>
    <name type="common">Borrelia afzelii</name>
    <dbReference type="NCBI Taxonomy" id="390236"/>
    <lineage>
        <taxon>Bacteria</taxon>
        <taxon>Pseudomonadati</taxon>
        <taxon>Spirochaetota</taxon>
        <taxon>Spirochaetia</taxon>
        <taxon>Spirochaetales</taxon>
        <taxon>Borreliaceae</taxon>
        <taxon>Borreliella</taxon>
    </lineage>
</organism>